<evidence type="ECO:0000255" key="1">
    <source>
        <dbReference type="HAMAP-Rule" id="MF_01603"/>
    </source>
</evidence>
<gene>
    <name evidence="1" type="primary">hldE</name>
    <name type="ordered locus">SFV_3092</name>
</gene>
<proteinExistence type="inferred from homology"/>
<feature type="chain" id="PRO_0000291694" description="Bifunctional protein HldE">
    <location>
        <begin position="1"/>
        <end position="477"/>
    </location>
</feature>
<feature type="region of interest" description="Ribokinase">
    <location>
        <begin position="1"/>
        <end position="318"/>
    </location>
</feature>
<feature type="region of interest" description="Cytidylyltransferase">
    <location>
        <begin position="344"/>
        <end position="477"/>
    </location>
</feature>
<feature type="active site" evidence="1">
    <location>
        <position position="264"/>
    </location>
</feature>
<feature type="binding site" evidence="1">
    <location>
        <begin position="195"/>
        <end position="198"/>
    </location>
    <ligand>
        <name>ATP</name>
        <dbReference type="ChEBI" id="CHEBI:30616"/>
    </ligand>
</feature>
<feature type="modified residue" description="N6-acetyllysine" evidence="1">
    <location>
        <position position="179"/>
    </location>
</feature>
<dbReference type="EC" id="2.7.1.167" evidence="1"/>
<dbReference type="EC" id="2.7.7.70" evidence="1"/>
<dbReference type="EMBL" id="CP000266">
    <property type="protein sequence ID" value="ABF05154.1"/>
    <property type="molecule type" value="Genomic_DNA"/>
</dbReference>
<dbReference type="RefSeq" id="WP_000869173.1">
    <property type="nucleotide sequence ID" value="NC_008258.1"/>
</dbReference>
<dbReference type="SMR" id="Q0T0L1"/>
<dbReference type="KEGG" id="sfv:SFV_3092"/>
<dbReference type="HOGENOM" id="CLU_021150_2_1_6"/>
<dbReference type="UniPathway" id="UPA00356">
    <property type="reaction ID" value="UER00437"/>
</dbReference>
<dbReference type="UniPathway" id="UPA00356">
    <property type="reaction ID" value="UER00439"/>
</dbReference>
<dbReference type="Proteomes" id="UP000000659">
    <property type="component" value="Chromosome"/>
</dbReference>
<dbReference type="GO" id="GO:0005829">
    <property type="term" value="C:cytosol"/>
    <property type="evidence" value="ECO:0007669"/>
    <property type="project" value="TreeGrafter"/>
</dbReference>
<dbReference type="GO" id="GO:0005524">
    <property type="term" value="F:ATP binding"/>
    <property type="evidence" value="ECO:0007669"/>
    <property type="project" value="UniProtKB-UniRule"/>
</dbReference>
<dbReference type="GO" id="GO:0033785">
    <property type="term" value="F:heptose 7-phosphate kinase activity"/>
    <property type="evidence" value="ECO:0007669"/>
    <property type="project" value="UniProtKB-UniRule"/>
</dbReference>
<dbReference type="GO" id="GO:0033786">
    <property type="term" value="F:heptose-1-phosphate adenylyltransferase activity"/>
    <property type="evidence" value="ECO:0007669"/>
    <property type="project" value="UniProtKB-UniRule"/>
</dbReference>
<dbReference type="GO" id="GO:0016773">
    <property type="term" value="F:phosphotransferase activity, alcohol group as acceptor"/>
    <property type="evidence" value="ECO:0007669"/>
    <property type="project" value="InterPro"/>
</dbReference>
<dbReference type="GO" id="GO:0097171">
    <property type="term" value="P:ADP-L-glycero-beta-D-manno-heptose biosynthetic process"/>
    <property type="evidence" value="ECO:0007669"/>
    <property type="project" value="UniProtKB-UniPathway"/>
</dbReference>
<dbReference type="CDD" id="cd01172">
    <property type="entry name" value="RfaE_like"/>
    <property type="match status" value="1"/>
</dbReference>
<dbReference type="FunFam" id="3.40.1190.20:FF:000002">
    <property type="entry name" value="Bifunctional protein HldE"/>
    <property type="match status" value="1"/>
</dbReference>
<dbReference type="FunFam" id="3.40.50.620:FF:000028">
    <property type="entry name" value="Bifunctional protein HldE"/>
    <property type="match status" value="1"/>
</dbReference>
<dbReference type="Gene3D" id="3.40.1190.20">
    <property type="match status" value="1"/>
</dbReference>
<dbReference type="Gene3D" id="3.40.50.620">
    <property type="entry name" value="HUPs"/>
    <property type="match status" value="1"/>
</dbReference>
<dbReference type="HAMAP" id="MF_01603">
    <property type="entry name" value="HldE"/>
    <property type="match status" value="1"/>
</dbReference>
<dbReference type="InterPro" id="IPR023030">
    <property type="entry name" value="Bifunc_HldE"/>
</dbReference>
<dbReference type="InterPro" id="IPR002173">
    <property type="entry name" value="Carboh/pur_kinase_PfkB_CS"/>
</dbReference>
<dbReference type="InterPro" id="IPR004821">
    <property type="entry name" value="Cyt_trans-like"/>
</dbReference>
<dbReference type="InterPro" id="IPR011611">
    <property type="entry name" value="PfkB_dom"/>
</dbReference>
<dbReference type="InterPro" id="IPR011913">
    <property type="entry name" value="RfaE_dom_I"/>
</dbReference>
<dbReference type="InterPro" id="IPR011914">
    <property type="entry name" value="RfaE_dom_II"/>
</dbReference>
<dbReference type="InterPro" id="IPR029056">
    <property type="entry name" value="Ribokinase-like"/>
</dbReference>
<dbReference type="InterPro" id="IPR014729">
    <property type="entry name" value="Rossmann-like_a/b/a_fold"/>
</dbReference>
<dbReference type="NCBIfam" id="TIGR00125">
    <property type="entry name" value="cyt_tran_rel"/>
    <property type="match status" value="1"/>
</dbReference>
<dbReference type="NCBIfam" id="NF008454">
    <property type="entry name" value="PRK11316.1"/>
    <property type="match status" value="1"/>
</dbReference>
<dbReference type="NCBIfam" id="TIGR02198">
    <property type="entry name" value="rfaE_dom_I"/>
    <property type="match status" value="1"/>
</dbReference>
<dbReference type="NCBIfam" id="TIGR02199">
    <property type="entry name" value="rfaE_dom_II"/>
    <property type="match status" value="1"/>
</dbReference>
<dbReference type="PANTHER" id="PTHR46969">
    <property type="entry name" value="BIFUNCTIONAL PROTEIN HLDE"/>
    <property type="match status" value="1"/>
</dbReference>
<dbReference type="PANTHER" id="PTHR46969:SF1">
    <property type="entry name" value="BIFUNCTIONAL PROTEIN HLDE"/>
    <property type="match status" value="1"/>
</dbReference>
<dbReference type="Pfam" id="PF01467">
    <property type="entry name" value="CTP_transf_like"/>
    <property type="match status" value="1"/>
</dbReference>
<dbReference type="Pfam" id="PF00294">
    <property type="entry name" value="PfkB"/>
    <property type="match status" value="1"/>
</dbReference>
<dbReference type="SUPFAM" id="SSF52374">
    <property type="entry name" value="Nucleotidylyl transferase"/>
    <property type="match status" value="1"/>
</dbReference>
<dbReference type="SUPFAM" id="SSF53613">
    <property type="entry name" value="Ribokinase-like"/>
    <property type="match status" value="1"/>
</dbReference>
<dbReference type="PROSITE" id="PS00583">
    <property type="entry name" value="PFKB_KINASES_1"/>
    <property type="match status" value="1"/>
</dbReference>
<comment type="function">
    <text evidence="1">Catalyzes the phosphorylation of D-glycero-D-manno-heptose 7-phosphate at the C-1 position to selectively form D-glycero-beta-D-manno-heptose-1,7-bisphosphate.</text>
</comment>
<comment type="function">
    <text evidence="1">Catalyzes the ADP transfer from ATP to D-glycero-beta-D-manno-heptose 1-phosphate, yielding ADP-D-glycero-beta-D-manno-heptose.</text>
</comment>
<comment type="catalytic activity">
    <reaction evidence="1">
        <text>D-glycero-beta-D-manno-heptose 7-phosphate + ATP = D-glycero-beta-D-manno-heptose 1,7-bisphosphate + ADP + H(+)</text>
        <dbReference type="Rhea" id="RHEA:27473"/>
        <dbReference type="ChEBI" id="CHEBI:15378"/>
        <dbReference type="ChEBI" id="CHEBI:30616"/>
        <dbReference type="ChEBI" id="CHEBI:60204"/>
        <dbReference type="ChEBI" id="CHEBI:60208"/>
        <dbReference type="ChEBI" id="CHEBI:456216"/>
        <dbReference type="EC" id="2.7.1.167"/>
    </reaction>
</comment>
<comment type="catalytic activity">
    <reaction evidence="1">
        <text>D-glycero-beta-D-manno-heptose 1-phosphate + ATP + H(+) = ADP-D-glycero-beta-D-manno-heptose + diphosphate</text>
        <dbReference type="Rhea" id="RHEA:27465"/>
        <dbReference type="ChEBI" id="CHEBI:15378"/>
        <dbReference type="ChEBI" id="CHEBI:30616"/>
        <dbReference type="ChEBI" id="CHEBI:33019"/>
        <dbReference type="ChEBI" id="CHEBI:59967"/>
        <dbReference type="ChEBI" id="CHEBI:61593"/>
        <dbReference type="EC" id="2.7.7.70"/>
    </reaction>
</comment>
<comment type="pathway">
    <text evidence="1">Nucleotide-sugar biosynthesis; ADP-L-glycero-beta-D-manno-heptose biosynthesis; ADP-L-glycero-beta-D-manno-heptose from D-glycero-beta-D-manno-heptose 7-phosphate: step 1/4.</text>
</comment>
<comment type="pathway">
    <text evidence="1">Nucleotide-sugar biosynthesis; ADP-L-glycero-beta-D-manno-heptose biosynthesis; ADP-L-glycero-beta-D-manno-heptose from D-glycero-beta-D-manno-heptose 7-phosphate: step 3/4.</text>
</comment>
<comment type="subunit">
    <text evidence="1">Homodimer.</text>
</comment>
<comment type="similarity">
    <text evidence="1">In the N-terminal section; belongs to the carbohydrate kinase PfkB family.</text>
</comment>
<comment type="similarity">
    <text evidence="1">In the C-terminal section; belongs to the cytidylyltransferase family.</text>
</comment>
<accession>Q0T0L1</accession>
<protein>
    <recommendedName>
        <fullName evidence="1">Bifunctional protein HldE</fullName>
    </recommendedName>
    <domain>
        <recommendedName>
            <fullName evidence="1">D-beta-D-heptose 7-phosphate kinase</fullName>
            <ecNumber evidence="1">2.7.1.167</ecNumber>
        </recommendedName>
        <alternativeName>
            <fullName evidence="1">D-beta-D-heptose 7-phosphotransferase</fullName>
        </alternativeName>
        <alternativeName>
            <fullName evidence="1">D-glycero-beta-D-manno-heptose-7-phosphate kinase</fullName>
        </alternativeName>
    </domain>
    <domain>
        <recommendedName>
            <fullName evidence="1">D-beta-D-heptose 1-phosphate adenylyltransferase</fullName>
            <ecNumber evidence="1">2.7.7.70</ecNumber>
        </recommendedName>
        <alternativeName>
            <fullName evidence="1">D-glycero-beta-D-manno-heptose 1-phosphate adenylyltransferase</fullName>
        </alternativeName>
    </domain>
</protein>
<organism>
    <name type="scientific">Shigella flexneri serotype 5b (strain 8401)</name>
    <dbReference type="NCBI Taxonomy" id="373384"/>
    <lineage>
        <taxon>Bacteria</taxon>
        <taxon>Pseudomonadati</taxon>
        <taxon>Pseudomonadota</taxon>
        <taxon>Gammaproteobacteria</taxon>
        <taxon>Enterobacterales</taxon>
        <taxon>Enterobacteriaceae</taxon>
        <taxon>Shigella</taxon>
    </lineage>
</organism>
<keyword id="KW-0007">Acetylation</keyword>
<keyword id="KW-0067">ATP-binding</keyword>
<keyword id="KW-0119">Carbohydrate metabolism</keyword>
<keyword id="KW-0418">Kinase</keyword>
<keyword id="KW-0511">Multifunctional enzyme</keyword>
<keyword id="KW-0547">Nucleotide-binding</keyword>
<keyword id="KW-0548">Nucleotidyltransferase</keyword>
<keyword id="KW-0808">Transferase</keyword>
<sequence length="477" mass="51111">MKVTLPEFERAGVMVVGDVMLDRYWYGPTSRISPEAPVPVVKVNTIEERPGGAANVAMNIASLGANARLVGLTGIDDAARALSKSLADVNVKCDFVSVPTHPTITKLRVLSRNQQLIRLDFEEGFEGVDPQPLHERINQALSSIGALVLSDYAKGALASVQQMIQLARKAGVPVLIDPKGTDFERYRGATLLTPNLSEFEAVVGKCKTEEEIVERGMKLIADYELSALLVTRSEQGMSLLQPGKAPLHMPTQAQEVYDVTGAGDTVIGVLAATLAAGNSLEEACFFANAAAGVVVGKLGTSTVSPIELENAVRGRADTGFGVMTEEELKLAVAAARKRGEKVVMTNGVFDILHAGHVFYLANARKLGDRLIVAVNSDASTKRLKGDSRPVNPLEQRMIVLGALEAVDWVVSFEEDTPQRLIAGILPDLLVKGGDYKPEEIAGSKEVWANGGEVLVLNFEDGCSTTNIIKKIQQDKKG</sequence>
<reference key="1">
    <citation type="journal article" date="2006" name="BMC Genomics">
        <title>Complete genome sequence of Shigella flexneri 5b and comparison with Shigella flexneri 2a.</title>
        <authorList>
            <person name="Nie H."/>
            <person name="Yang F."/>
            <person name="Zhang X."/>
            <person name="Yang J."/>
            <person name="Chen L."/>
            <person name="Wang J."/>
            <person name="Xiong Z."/>
            <person name="Peng J."/>
            <person name="Sun L."/>
            <person name="Dong J."/>
            <person name="Xue Y."/>
            <person name="Xu X."/>
            <person name="Chen S."/>
            <person name="Yao Z."/>
            <person name="Shen Y."/>
            <person name="Jin Q."/>
        </authorList>
    </citation>
    <scope>NUCLEOTIDE SEQUENCE [LARGE SCALE GENOMIC DNA]</scope>
    <source>
        <strain>8401</strain>
    </source>
</reference>
<name>HLDE_SHIF8</name>